<gene>
    <name evidence="1" type="primary">rnhB</name>
    <name type="ordered locus">USA300HOU_1175</name>
</gene>
<keyword id="KW-0963">Cytoplasm</keyword>
<keyword id="KW-0255">Endonuclease</keyword>
<keyword id="KW-0378">Hydrolase</keyword>
<keyword id="KW-0464">Manganese</keyword>
<keyword id="KW-0479">Metal-binding</keyword>
<keyword id="KW-0540">Nuclease</keyword>
<name>RNH2_STAAT</name>
<evidence type="ECO:0000255" key="1">
    <source>
        <dbReference type="HAMAP-Rule" id="MF_00052"/>
    </source>
</evidence>
<evidence type="ECO:0000255" key="2">
    <source>
        <dbReference type="PROSITE-ProRule" id="PRU01319"/>
    </source>
</evidence>
<dbReference type="EC" id="3.1.26.4" evidence="1"/>
<dbReference type="EMBL" id="CP000730">
    <property type="protein sequence ID" value="ABX29190.1"/>
    <property type="molecule type" value="Genomic_DNA"/>
</dbReference>
<dbReference type="RefSeq" id="WP_000176394.1">
    <property type="nucleotide sequence ID" value="NC_010079.1"/>
</dbReference>
<dbReference type="SMR" id="A8Z3S4"/>
<dbReference type="KEGG" id="sax:USA300HOU_1175"/>
<dbReference type="HOGENOM" id="CLU_036532_2_1_9"/>
<dbReference type="GO" id="GO:0005737">
    <property type="term" value="C:cytoplasm"/>
    <property type="evidence" value="ECO:0007669"/>
    <property type="project" value="UniProtKB-SubCell"/>
</dbReference>
<dbReference type="GO" id="GO:0032299">
    <property type="term" value="C:ribonuclease H2 complex"/>
    <property type="evidence" value="ECO:0007669"/>
    <property type="project" value="TreeGrafter"/>
</dbReference>
<dbReference type="GO" id="GO:0030145">
    <property type="term" value="F:manganese ion binding"/>
    <property type="evidence" value="ECO:0007669"/>
    <property type="project" value="UniProtKB-UniRule"/>
</dbReference>
<dbReference type="GO" id="GO:0003723">
    <property type="term" value="F:RNA binding"/>
    <property type="evidence" value="ECO:0007669"/>
    <property type="project" value="InterPro"/>
</dbReference>
<dbReference type="GO" id="GO:0004523">
    <property type="term" value="F:RNA-DNA hybrid ribonuclease activity"/>
    <property type="evidence" value="ECO:0007669"/>
    <property type="project" value="UniProtKB-UniRule"/>
</dbReference>
<dbReference type="GO" id="GO:0043137">
    <property type="term" value="P:DNA replication, removal of RNA primer"/>
    <property type="evidence" value="ECO:0007669"/>
    <property type="project" value="TreeGrafter"/>
</dbReference>
<dbReference type="GO" id="GO:0006298">
    <property type="term" value="P:mismatch repair"/>
    <property type="evidence" value="ECO:0007669"/>
    <property type="project" value="TreeGrafter"/>
</dbReference>
<dbReference type="CDD" id="cd07182">
    <property type="entry name" value="RNase_HII_bacteria_HII_like"/>
    <property type="match status" value="1"/>
</dbReference>
<dbReference type="FunFam" id="3.30.420.10:FF:000006">
    <property type="entry name" value="Ribonuclease HII"/>
    <property type="match status" value="1"/>
</dbReference>
<dbReference type="Gene3D" id="3.30.420.10">
    <property type="entry name" value="Ribonuclease H-like superfamily/Ribonuclease H"/>
    <property type="match status" value="1"/>
</dbReference>
<dbReference type="HAMAP" id="MF_00052_B">
    <property type="entry name" value="RNase_HII_B"/>
    <property type="match status" value="1"/>
</dbReference>
<dbReference type="InterPro" id="IPR022898">
    <property type="entry name" value="RNase_HII"/>
</dbReference>
<dbReference type="InterPro" id="IPR001352">
    <property type="entry name" value="RNase_HII/HIII"/>
</dbReference>
<dbReference type="InterPro" id="IPR024567">
    <property type="entry name" value="RNase_HII/HIII_dom"/>
</dbReference>
<dbReference type="InterPro" id="IPR012337">
    <property type="entry name" value="RNaseH-like_sf"/>
</dbReference>
<dbReference type="InterPro" id="IPR036397">
    <property type="entry name" value="RNaseH_sf"/>
</dbReference>
<dbReference type="NCBIfam" id="NF000594">
    <property type="entry name" value="PRK00015.1-1"/>
    <property type="match status" value="1"/>
</dbReference>
<dbReference type="NCBIfam" id="NF000595">
    <property type="entry name" value="PRK00015.1-3"/>
    <property type="match status" value="1"/>
</dbReference>
<dbReference type="PANTHER" id="PTHR10954">
    <property type="entry name" value="RIBONUCLEASE H2 SUBUNIT A"/>
    <property type="match status" value="1"/>
</dbReference>
<dbReference type="PANTHER" id="PTHR10954:SF18">
    <property type="entry name" value="RIBONUCLEASE HII"/>
    <property type="match status" value="1"/>
</dbReference>
<dbReference type="Pfam" id="PF01351">
    <property type="entry name" value="RNase_HII"/>
    <property type="match status" value="1"/>
</dbReference>
<dbReference type="SUPFAM" id="SSF53098">
    <property type="entry name" value="Ribonuclease H-like"/>
    <property type="match status" value="1"/>
</dbReference>
<dbReference type="PROSITE" id="PS51975">
    <property type="entry name" value="RNASE_H_2"/>
    <property type="match status" value="1"/>
</dbReference>
<comment type="function">
    <text evidence="1">Endonuclease that specifically degrades the RNA of RNA-DNA hybrids.</text>
</comment>
<comment type="catalytic activity">
    <reaction evidence="1">
        <text>Endonucleolytic cleavage to 5'-phosphomonoester.</text>
        <dbReference type="EC" id="3.1.26.4"/>
    </reaction>
</comment>
<comment type="cofactor">
    <cofactor evidence="1">
        <name>Mn(2+)</name>
        <dbReference type="ChEBI" id="CHEBI:29035"/>
    </cofactor>
    <cofactor evidence="1">
        <name>Mg(2+)</name>
        <dbReference type="ChEBI" id="CHEBI:18420"/>
    </cofactor>
    <text evidence="1">Manganese or magnesium. Binds 1 divalent metal ion per monomer in the absence of substrate. May bind a second metal ion after substrate binding.</text>
</comment>
<comment type="subcellular location">
    <subcellularLocation>
        <location evidence="1">Cytoplasm</location>
    </subcellularLocation>
</comment>
<comment type="similarity">
    <text evidence="1">Belongs to the RNase HII family.</text>
</comment>
<accession>A8Z3S4</accession>
<organism>
    <name type="scientific">Staphylococcus aureus (strain USA300 / TCH1516)</name>
    <dbReference type="NCBI Taxonomy" id="451516"/>
    <lineage>
        <taxon>Bacteria</taxon>
        <taxon>Bacillati</taxon>
        <taxon>Bacillota</taxon>
        <taxon>Bacilli</taxon>
        <taxon>Bacillales</taxon>
        <taxon>Staphylococcaceae</taxon>
        <taxon>Staphylococcus</taxon>
    </lineage>
</organism>
<proteinExistence type="inferred from homology"/>
<protein>
    <recommendedName>
        <fullName evidence="1">Ribonuclease HII</fullName>
        <shortName evidence="1">RNase HII</shortName>
        <ecNumber evidence="1">3.1.26.4</ecNumber>
    </recommendedName>
</protein>
<feature type="chain" id="PRO_1000074939" description="Ribonuclease HII">
    <location>
        <begin position="1"/>
        <end position="255"/>
    </location>
</feature>
<feature type="domain" description="RNase H type-2" evidence="2">
    <location>
        <begin position="72"/>
        <end position="255"/>
    </location>
</feature>
<feature type="binding site" evidence="1">
    <location>
        <position position="78"/>
    </location>
    <ligand>
        <name>a divalent metal cation</name>
        <dbReference type="ChEBI" id="CHEBI:60240"/>
    </ligand>
</feature>
<feature type="binding site" evidence="1">
    <location>
        <position position="79"/>
    </location>
    <ligand>
        <name>a divalent metal cation</name>
        <dbReference type="ChEBI" id="CHEBI:60240"/>
    </ligand>
</feature>
<feature type="binding site" evidence="1">
    <location>
        <position position="170"/>
    </location>
    <ligand>
        <name>a divalent metal cation</name>
        <dbReference type="ChEBI" id="CHEBI:60240"/>
    </ligand>
</feature>
<sequence>MTLTIKEVTQLINAVNTIEELENHECFLDERKGVQNAIARRRKALEKEQALKEKYVEMTYFENEILKEHPNAIICGIDEVGRGPLAGPVVACATILNSNHNYLGLDDSKKVPVTKRLELNEALKNEVTAFAYGIATAEEIDEFNIYKATQIAMQRAIDGLSVQPTHLLIDAMTLDNALPQVSLIKGDARSVSIAAASIMAKVFRDDYMTQLSKDYPEYGFEKNAGYGTKQHLLAIDDIGIMKEHRKSFEPIKSLL</sequence>
<reference key="1">
    <citation type="journal article" date="2007" name="BMC Microbiol.">
        <title>Subtle genetic changes enhance virulence of methicillin resistant and sensitive Staphylococcus aureus.</title>
        <authorList>
            <person name="Highlander S.K."/>
            <person name="Hulten K.G."/>
            <person name="Qin X."/>
            <person name="Jiang H."/>
            <person name="Yerrapragada S."/>
            <person name="Mason E.O. Jr."/>
            <person name="Shang Y."/>
            <person name="Williams T.M."/>
            <person name="Fortunov R.M."/>
            <person name="Liu Y."/>
            <person name="Igboeli O."/>
            <person name="Petrosino J."/>
            <person name="Tirumalai M."/>
            <person name="Uzman A."/>
            <person name="Fox G.E."/>
            <person name="Cardenas A.M."/>
            <person name="Muzny D.M."/>
            <person name="Hemphill L."/>
            <person name="Ding Y."/>
            <person name="Dugan S."/>
            <person name="Blyth P.R."/>
            <person name="Buhay C.J."/>
            <person name="Dinh H.H."/>
            <person name="Hawes A.C."/>
            <person name="Holder M."/>
            <person name="Kovar C.L."/>
            <person name="Lee S.L."/>
            <person name="Liu W."/>
            <person name="Nazareth L.V."/>
            <person name="Wang Q."/>
            <person name="Zhou J."/>
            <person name="Kaplan S.L."/>
            <person name="Weinstock G.M."/>
        </authorList>
    </citation>
    <scope>NUCLEOTIDE SEQUENCE [LARGE SCALE GENOMIC DNA]</scope>
    <source>
        <strain>USA300 / TCH1516</strain>
    </source>
</reference>